<name>KAD_XANOM</name>
<evidence type="ECO:0000255" key="1">
    <source>
        <dbReference type="HAMAP-Rule" id="MF_00235"/>
    </source>
</evidence>
<reference key="1">
    <citation type="journal article" date="2005" name="Jpn. Agric. Res. Q.">
        <title>Genome sequence of Xanthomonas oryzae pv. oryzae suggests contribution of large numbers of effector genes and insertion sequences to its race diversity.</title>
        <authorList>
            <person name="Ochiai H."/>
            <person name="Inoue Y."/>
            <person name="Takeya M."/>
            <person name="Sasaki A."/>
            <person name="Kaku H."/>
        </authorList>
    </citation>
    <scope>NUCLEOTIDE SEQUENCE [LARGE SCALE GENOMIC DNA]</scope>
    <source>
        <strain>MAFF 311018</strain>
    </source>
</reference>
<comment type="function">
    <text evidence="1">Catalyzes the reversible transfer of the terminal phosphate group between ATP and AMP. Plays an important role in cellular energy homeostasis and in adenine nucleotide metabolism.</text>
</comment>
<comment type="catalytic activity">
    <reaction evidence="1">
        <text>AMP + ATP = 2 ADP</text>
        <dbReference type="Rhea" id="RHEA:12973"/>
        <dbReference type="ChEBI" id="CHEBI:30616"/>
        <dbReference type="ChEBI" id="CHEBI:456215"/>
        <dbReference type="ChEBI" id="CHEBI:456216"/>
        <dbReference type="EC" id="2.7.4.3"/>
    </reaction>
</comment>
<comment type="pathway">
    <text evidence="1">Purine metabolism; AMP biosynthesis via salvage pathway; AMP from ADP: step 1/1.</text>
</comment>
<comment type="subunit">
    <text evidence="1">Monomer.</text>
</comment>
<comment type="subcellular location">
    <subcellularLocation>
        <location evidence="1">Cytoplasm</location>
    </subcellularLocation>
</comment>
<comment type="domain">
    <text evidence="1">Consists of three domains, a large central CORE domain and two small peripheral domains, NMPbind and LID, which undergo movements during catalysis. The LID domain closes over the site of phosphoryl transfer upon ATP binding. Assembling and dissambling the active center during each catalytic cycle provides an effective means to prevent ATP hydrolysis.</text>
</comment>
<comment type="similarity">
    <text evidence="1">Belongs to the adenylate kinase family.</text>
</comment>
<proteinExistence type="inferred from homology"/>
<feature type="chain" id="PRO_1000058938" description="Adenylate kinase">
    <location>
        <begin position="1"/>
        <end position="187"/>
    </location>
</feature>
<feature type="region of interest" description="NMP" evidence="1">
    <location>
        <begin position="30"/>
        <end position="59"/>
    </location>
</feature>
<feature type="region of interest" description="LID" evidence="1">
    <location>
        <begin position="126"/>
        <end position="136"/>
    </location>
</feature>
<feature type="binding site" evidence="1">
    <location>
        <begin position="10"/>
        <end position="15"/>
    </location>
    <ligand>
        <name>ATP</name>
        <dbReference type="ChEBI" id="CHEBI:30616"/>
    </ligand>
</feature>
<feature type="binding site" evidence="1">
    <location>
        <position position="31"/>
    </location>
    <ligand>
        <name>AMP</name>
        <dbReference type="ChEBI" id="CHEBI:456215"/>
    </ligand>
</feature>
<feature type="binding site" evidence="1">
    <location>
        <position position="36"/>
    </location>
    <ligand>
        <name>AMP</name>
        <dbReference type="ChEBI" id="CHEBI:456215"/>
    </ligand>
</feature>
<feature type="binding site" evidence="1">
    <location>
        <begin position="57"/>
        <end position="59"/>
    </location>
    <ligand>
        <name>AMP</name>
        <dbReference type="ChEBI" id="CHEBI:456215"/>
    </ligand>
</feature>
<feature type="binding site" evidence="1">
    <location>
        <begin position="85"/>
        <end position="88"/>
    </location>
    <ligand>
        <name>AMP</name>
        <dbReference type="ChEBI" id="CHEBI:456215"/>
    </ligand>
</feature>
<feature type="binding site" evidence="1">
    <location>
        <position position="92"/>
    </location>
    <ligand>
        <name>AMP</name>
        <dbReference type="ChEBI" id="CHEBI:456215"/>
    </ligand>
</feature>
<feature type="binding site" evidence="1">
    <location>
        <position position="127"/>
    </location>
    <ligand>
        <name>ATP</name>
        <dbReference type="ChEBI" id="CHEBI:30616"/>
    </ligand>
</feature>
<feature type="binding site" evidence="1">
    <location>
        <position position="133"/>
    </location>
    <ligand>
        <name>AMP</name>
        <dbReference type="ChEBI" id="CHEBI:456215"/>
    </ligand>
</feature>
<feature type="binding site" evidence="1">
    <location>
        <position position="144"/>
    </location>
    <ligand>
        <name>AMP</name>
        <dbReference type="ChEBI" id="CHEBI:456215"/>
    </ligand>
</feature>
<feature type="binding site" evidence="1">
    <location>
        <position position="172"/>
    </location>
    <ligand>
        <name>ATP</name>
        <dbReference type="ChEBI" id="CHEBI:30616"/>
    </ligand>
</feature>
<keyword id="KW-0067">ATP-binding</keyword>
<keyword id="KW-0963">Cytoplasm</keyword>
<keyword id="KW-0418">Kinase</keyword>
<keyword id="KW-0545">Nucleotide biosynthesis</keyword>
<keyword id="KW-0547">Nucleotide-binding</keyword>
<keyword id="KW-0808">Transferase</keyword>
<sequence>MRLVLLGPPGSGKGTQATRLKDTFEIPHISTGDLLRAEVAAGSPLGLKAKEVMARGDLVSDDILLGMLEARLGQADVAKGFILDGYPRNVAQANALCALLSKIGQPLDAVVQLDVASELLVERIAGRAKAEGREDDNPESVRKRLQVYTDSTAPVIGFYEQRGKLTRVDGVGSLDEVLERIRKALGR</sequence>
<gene>
    <name evidence="1" type="primary">adk</name>
    <name type="ordered locus">XOO0879</name>
</gene>
<organism>
    <name type="scientific">Xanthomonas oryzae pv. oryzae (strain MAFF 311018)</name>
    <dbReference type="NCBI Taxonomy" id="342109"/>
    <lineage>
        <taxon>Bacteria</taxon>
        <taxon>Pseudomonadati</taxon>
        <taxon>Pseudomonadota</taxon>
        <taxon>Gammaproteobacteria</taxon>
        <taxon>Lysobacterales</taxon>
        <taxon>Lysobacteraceae</taxon>
        <taxon>Xanthomonas</taxon>
    </lineage>
</organism>
<protein>
    <recommendedName>
        <fullName evidence="1">Adenylate kinase</fullName>
        <shortName evidence="1">AK</shortName>
        <ecNumber evidence="1">2.7.4.3</ecNumber>
    </recommendedName>
    <alternativeName>
        <fullName evidence="1">ATP-AMP transphosphorylase</fullName>
    </alternativeName>
    <alternativeName>
        <fullName evidence="1">ATP:AMP phosphotransferase</fullName>
    </alternativeName>
    <alternativeName>
        <fullName evidence="1">Adenylate monophosphate kinase</fullName>
    </alternativeName>
</protein>
<dbReference type="EC" id="2.7.4.3" evidence="1"/>
<dbReference type="EMBL" id="AP008229">
    <property type="protein sequence ID" value="BAE67634.1"/>
    <property type="molecule type" value="Genomic_DNA"/>
</dbReference>
<dbReference type="RefSeq" id="WP_011257828.1">
    <property type="nucleotide sequence ID" value="NC_007705.1"/>
</dbReference>
<dbReference type="SMR" id="Q2P743"/>
<dbReference type="KEGG" id="xom:XOO0879"/>
<dbReference type="HOGENOM" id="CLU_032354_4_1_6"/>
<dbReference type="UniPathway" id="UPA00588">
    <property type="reaction ID" value="UER00649"/>
</dbReference>
<dbReference type="GO" id="GO:0005737">
    <property type="term" value="C:cytoplasm"/>
    <property type="evidence" value="ECO:0007669"/>
    <property type="project" value="UniProtKB-SubCell"/>
</dbReference>
<dbReference type="GO" id="GO:0004017">
    <property type="term" value="F:adenylate kinase activity"/>
    <property type="evidence" value="ECO:0007669"/>
    <property type="project" value="UniProtKB-UniRule"/>
</dbReference>
<dbReference type="GO" id="GO:0005524">
    <property type="term" value="F:ATP binding"/>
    <property type="evidence" value="ECO:0007669"/>
    <property type="project" value="UniProtKB-UniRule"/>
</dbReference>
<dbReference type="GO" id="GO:0044209">
    <property type="term" value="P:AMP salvage"/>
    <property type="evidence" value="ECO:0007669"/>
    <property type="project" value="UniProtKB-UniRule"/>
</dbReference>
<dbReference type="CDD" id="cd01428">
    <property type="entry name" value="ADK"/>
    <property type="match status" value="1"/>
</dbReference>
<dbReference type="Gene3D" id="3.40.50.300">
    <property type="entry name" value="P-loop containing nucleotide triphosphate hydrolases"/>
    <property type="match status" value="1"/>
</dbReference>
<dbReference type="HAMAP" id="MF_00235">
    <property type="entry name" value="Adenylate_kinase_Adk"/>
    <property type="match status" value="1"/>
</dbReference>
<dbReference type="InterPro" id="IPR000850">
    <property type="entry name" value="Adenylat/UMP-CMP_kin"/>
</dbReference>
<dbReference type="InterPro" id="IPR033690">
    <property type="entry name" value="Adenylat_kinase_CS"/>
</dbReference>
<dbReference type="InterPro" id="IPR027417">
    <property type="entry name" value="P-loop_NTPase"/>
</dbReference>
<dbReference type="NCBIfam" id="NF001381">
    <property type="entry name" value="PRK00279.1-3"/>
    <property type="match status" value="1"/>
</dbReference>
<dbReference type="NCBIfam" id="NF011100">
    <property type="entry name" value="PRK14527.1"/>
    <property type="match status" value="1"/>
</dbReference>
<dbReference type="NCBIfam" id="NF011101">
    <property type="entry name" value="PRK14528.1"/>
    <property type="match status" value="1"/>
</dbReference>
<dbReference type="NCBIfam" id="NF011104">
    <property type="entry name" value="PRK14531.1"/>
    <property type="match status" value="1"/>
</dbReference>
<dbReference type="NCBIfam" id="NF011105">
    <property type="entry name" value="PRK14532.1"/>
    <property type="match status" value="1"/>
</dbReference>
<dbReference type="PANTHER" id="PTHR23359">
    <property type="entry name" value="NUCLEOTIDE KINASE"/>
    <property type="match status" value="1"/>
</dbReference>
<dbReference type="Pfam" id="PF00406">
    <property type="entry name" value="ADK"/>
    <property type="match status" value="1"/>
</dbReference>
<dbReference type="PRINTS" id="PR00094">
    <property type="entry name" value="ADENYLTKNASE"/>
</dbReference>
<dbReference type="SUPFAM" id="SSF52540">
    <property type="entry name" value="P-loop containing nucleoside triphosphate hydrolases"/>
    <property type="match status" value="1"/>
</dbReference>
<dbReference type="PROSITE" id="PS00113">
    <property type="entry name" value="ADENYLATE_KINASE"/>
    <property type="match status" value="1"/>
</dbReference>
<accession>Q2P743</accession>